<evidence type="ECO:0000250" key="1"/>
<evidence type="ECO:0000305" key="2"/>
<dbReference type="EMBL" id="AE016819">
    <property type="protein sequence ID" value="AAS53589.2"/>
    <property type="molecule type" value="Genomic_DNA"/>
</dbReference>
<dbReference type="RefSeq" id="NP_985765.2">
    <property type="nucleotide sequence ID" value="NM_211119.2"/>
</dbReference>
<dbReference type="SMR" id="Q754H6"/>
<dbReference type="FunCoup" id="Q754H6">
    <property type="interactions" value="1082"/>
</dbReference>
<dbReference type="STRING" id="284811.Q754H6"/>
<dbReference type="EnsemblFungi" id="AAS53589">
    <property type="protein sequence ID" value="AAS53589"/>
    <property type="gene ID" value="AGOS_AFR218W"/>
</dbReference>
<dbReference type="GeneID" id="4622027"/>
<dbReference type="KEGG" id="ago:AGOS_AFR218W"/>
<dbReference type="eggNOG" id="KOG1104">
    <property type="taxonomic scope" value="Eukaryota"/>
</dbReference>
<dbReference type="HOGENOM" id="CLU_011380_0_0_1"/>
<dbReference type="InParanoid" id="Q754H6"/>
<dbReference type="OMA" id="CAAEGLM"/>
<dbReference type="OrthoDB" id="10252707at2759"/>
<dbReference type="Proteomes" id="UP000000591">
    <property type="component" value="Chromosome VI"/>
</dbReference>
<dbReference type="GO" id="GO:0000243">
    <property type="term" value="C:commitment complex"/>
    <property type="evidence" value="ECO:0007669"/>
    <property type="project" value="EnsemblFungi"/>
</dbReference>
<dbReference type="GO" id="GO:0005846">
    <property type="term" value="C:nuclear cap binding complex"/>
    <property type="evidence" value="ECO:0000318"/>
    <property type="project" value="GO_Central"/>
</dbReference>
<dbReference type="GO" id="GO:0005634">
    <property type="term" value="C:nucleus"/>
    <property type="evidence" value="ECO:0000318"/>
    <property type="project" value="GO_Central"/>
</dbReference>
<dbReference type="GO" id="GO:0003729">
    <property type="term" value="F:mRNA binding"/>
    <property type="evidence" value="ECO:0000318"/>
    <property type="project" value="GO_Central"/>
</dbReference>
<dbReference type="GO" id="GO:0000339">
    <property type="term" value="F:RNA cap binding"/>
    <property type="evidence" value="ECO:0000318"/>
    <property type="project" value="GO_Central"/>
</dbReference>
<dbReference type="GO" id="GO:0006370">
    <property type="term" value="P:7-methylguanosine mRNA capping"/>
    <property type="evidence" value="ECO:0007669"/>
    <property type="project" value="UniProtKB-KW"/>
</dbReference>
<dbReference type="GO" id="GO:0031124">
    <property type="term" value="P:mRNA 3'-end processing"/>
    <property type="evidence" value="ECO:0007669"/>
    <property type="project" value="EnsemblFungi"/>
</dbReference>
<dbReference type="GO" id="GO:0006406">
    <property type="term" value="P:mRNA export from nucleus"/>
    <property type="evidence" value="ECO:0007669"/>
    <property type="project" value="EnsemblFungi"/>
</dbReference>
<dbReference type="GO" id="GO:0000398">
    <property type="term" value="P:mRNA splicing, via spliceosome"/>
    <property type="evidence" value="ECO:0007669"/>
    <property type="project" value="EnsemblFungi"/>
</dbReference>
<dbReference type="GO" id="GO:0042789">
    <property type="term" value="P:mRNA transcription by RNA polymerase II"/>
    <property type="evidence" value="ECO:0007669"/>
    <property type="project" value="EnsemblFungi"/>
</dbReference>
<dbReference type="GO" id="GO:0000184">
    <property type="term" value="P:nuclear-transcribed mRNA catabolic process, nonsense-mediated decay"/>
    <property type="evidence" value="ECO:0000318"/>
    <property type="project" value="GO_Central"/>
</dbReference>
<dbReference type="GO" id="GO:0006970">
    <property type="term" value="P:response to osmotic stress"/>
    <property type="evidence" value="ECO:0007669"/>
    <property type="project" value="EnsemblFungi"/>
</dbReference>
<dbReference type="GO" id="GO:0006364">
    <property type="term" value="P:rRNA processing"/>
    <property type="evidence" value="ECO:0007669"/>
    <property type="project" value="UniProtKB-KW"/>
</dbReference>
<dbReference type="FunFam" id="1.25.40.180:FF:000056">
    <property type="entry name" value="Sto1p"/>
    <property type="match status" value="1"/>
</dbReference>
<dbReference type="Gene3D" id="1.25.40.180">
    <property type="match status" value="3"/>
</dbReference>
<dbReference type="InterPro" id="IPR016024">
    <property type="entry name" value="ARM-type_fold"/>
</dbReference>
<dbReference type="InterPro" id="IPR027159">
    <property type="entry name" value="CBP80"/>
</dbReference>
<dbReference type="InterPro" id="IPR015172">
    <property type="entry name" value="MIF4G-like_typ-1"/>
</dbReference>
<dbReference type="InterPro" id="IPR015174">
    <property type="entry name" value="MIF4G-like_typ-2"/>
</dbReference>
<dbReference type="InterPro" id="IPR003890">
    <property type="entry name" value="MIF4G-like_typ-3"/>
</dbReference>
<dbReference type="PANTHER" id="PTHR12412">
    <property type="entry name" value="CAP BINDING PROTEIN"/>
    <property type="match status" value="1"/>
</dbReference>
<dbReference type="PANTHER" id="PTHR12412:SF2">
    <property type="entry name" value="NUCLEAR CAP-BINDING PROTEIN SUBUNIT 1"/>
    <property type="match status" value="1"/>
</dbReference>
<dbReference type="Pfam" id="PF02854">
    <property type="entry name" value="MIF4G"/>
    <property type="match status" value="1"/>
</dbReference>
<dbReference type="Pfam" id="PF09088">
    <property type="entry name" value="MIF4G_like"/>
    <property type="match status" value="1"/>
</dbReference>
<dbReference type="Pfam" id="PF09090">
    <property type="entry name" value="MIF4G_like_2"/>
    <property type="match status" value="1"/>
</dbReference>
<dbReference type="SMART" id="SM00543">
    <property type="entry name" value="MIF4G"/>
    <property type="match status" value="1"/>
</dbReference>
<dbReference type="SUPFAM" id="SSF48371">
    <property type="entry name" value="ARM repeat"/>
    <property type="match status" value="3"/>
</dbReference>
<feature type="chain" id="PRO_0000232992" description="Nuclear cap-binding protein complex subunit 1">
    <location>
        <begin position="1"/>
        <end position="860"/>
    </location>
</feature>
<feature type="domain" description="MIF4G">
    <location>
        <begin position="36"/>
        <end position="271"/>
    </location>
</feature>
<proteinExistence type="inferred from homology"/>
<reference key="1">
    <citation type="journal article" date="2004" name="Science">
        <title>The Ashbya gossypii genome as a tool for mapping the ancient Saccharomyces cerevisiae genome.</title>
        <authorList>
            <person name="Dietrich F.S."/>
            <person name="Voegeli S."/>
            <person name="Brachat S."/>
            <person name="Lerch A."/>
            <person name="Gates K."/>
            <person name="Steiner S."/>
            <person name="Mohr C."/>
            <person name="Poehlmann R."/>
            <person name="Luedi P."/>
            <person name="Choi S."/>
            <person name="Wing R.A."/>
            <person name="Flavier A."/>
            <person name="Gaffney T.D."/>
            <person name="Philippsen P."/>
        </authorList>
    </citation>
    <scope>NUCLEOTIDE SEQUENCE [LARGE SCALE GENOMIC DNA]</scope>
    <source>
        <strain>ATCC 10895 / CBS 109.51 / FGSC 9923 / NRRL Y-1056</strain>
    </source>
</reference>
<reference key="2">
    <citation type="journal article" date="2013" name="G3 (Bethesda)">
        <title>Genomes of Ashbya fungi isolated from insects reveal four mating-type loci, numerous translocations, lack of transposons, and distinct gene duplications.</title>
        <authorList>
            <person name="Dietrich F.S."/>
            <person name="Voegeli S."/>
            <person name="Kuo S."/>
            <person name="Philippsen P."/>
        </authorList>
    </citation>
    <scope>GENOME REANNOTATION</scope>
    <scope>SEQUENCE REVISION TO 20-21 AND 28-35</scope>
    <source>
        <strain>ATCC 10895 / CBS 109.51 / FGSC 9923 / NRRL Y-1056</strain>
    </source>
</reference>
<keyword id="KW-0506">mRNA capping</keyword>
<keyword id="KW-0507">mRNA processing</keyword>
<keyword id="KW-0508">mRNA splicing</keyword>
<keyword id="KW-0509">mRNA transport</keyword>
<keyword id="KW-0539">Nucleus</keyword>
<keyword id="KW-1185">Reference proteome</keyword>
<keyword id="KW-0690">Ribosome biogenesis</keyword>
<keyword id="KW-0694">RNA-binding</keyword>
<keyword id="KW-0698">rRNA processing</keyword>
<keyword id="KW-0813">Transport</keyword>
<organism>
    <name type="scientific">Eremothecium gossypii (strain ATCC 10895 / CBS 109.51 / FGSC 9923 / NRRL Y-1056)</name>
    <name type="common">Yeast</name>
    <name type="synonym">Ashbya gossypii</name>
    <dbReference type="NCBI Taxonomy" id="284811"/>
    <lineage>
        <taxon>Eukaryota</taxon>
        <taxon>Fungi</taxon>
        <taxon>Dikarya</taxon>
        <taxon>Ascomycota</taxon>
        <taxon>Saccharomycotina</taxon>
        <taxon>Saccharomycetes</taxon>
        <taxon>Saccharomycetales</taxon>
        <taxon>Saccharomycetaceae</taxon>
        <taxon>Eremothecium</taxon>
    </lineage>
</organism>
<name>NCBP1_EREGS</name>
<protein>
    <recommendedName>
        <fullName>Nuclear cap-binding protein complex subunit 1</fullName>
    </recommendedName>
    <alternativeName>
        <fullName>80 kDa nuclear cap-binding protein</fullName>
        <shortName>CBP80</shortName>
        <shortName>NCBP 80 kDa subunit</shortName>
    </alternativeName>
</protein>
<sequence length="860" mass="99442">MSGMKRRYDYEEEDGYRDFRPRYSKRQRLPPVVQLCKDMLPDIRTIGESVKAFEEDIKFLSEAIINEFGNDEYFNNALLSTFNALILEQPHKQPAIALLTIVVNSGNPAAGKSVINYFYEKLQHLLDMTVVDDFEVTSNETGPWNKIKLTLRFLSLLSPVITLTELTNVYQRLFELAVQLNRSSDANTRNPLSEAIYTNTLLNIPYLFFFNKEDETLRTNVEDLIQYAESNYEVKTVDLSLTKEYNKNLPYEPVQWVQIVLSNVKNALANDMEELKNLFPDYQNLLPTSIEQQMFNDPLTIPEFEKLLPFSGLDKGLGSVDSMWKTPRTAFQVYLPNVVGDFSTVVPITTYTGMLFDDIIVDIVESLEFNRHEVARQVVTLDLYFKPGIFTEPGLSIAQLLVQHNEMPELSTYKIEDLAIENILGLIFKLPTVTQSFAYFYTLLVEICQNSPKAIAPVFGRAFRLFYNNLDNMDHELKMRYLDWFSIQMSNFNFSWKWNEWEQDSIAFSKSFYNPKITFAKNLIRKELRLTSNRPDVEDSLTPEFKQYLDASYISKDQLASYYQSFFEGFSFDPEVIKDNDLLFKNEVFPFHEKVQLILDYIHKQPLEKNISELESLLEDIKSAHGDKIPDFNRFTVTLLIQALVYSGNRSLSHANKYISDAKSDLVTILEKMEVPPEVKEQWIIEAVIRYWNCNSQNGFLIVDSFKHSELVTAKSILTFSLTDLNGQNLGLVDATSIESTFRTLTELALQQASDISVFEFVFERLLEIINDTVSQLGTNEEIVAPSVDNETMLDVDELARLDLIWKYESAVGFIKSILRKYSDEYSVLLDKFSAGLEQAVPHEPTRKQLDQWFNEIREL</sequence>
<gene>
    <name type="primary">CBC1</name>
    <name type="ordered locus">AFR218W</name>
</gene>
<comment type="function">
    <text evidence="1">Component of the cap-binding complex (CBC) involved in the nuclear export of capped U snRNAs. The CBC complex is required for efficient pre-mRNA splicing through efficient commitment complex and spliceosome formation; and involved in rRNA processing at sites A0, A1 and A2 (By similarity).</text>
</comment>
<comment type="subunit">
    <text evidence="1">Component of the nuclear cap-binding complex (CBC).</text>
</comment>
<comment type="subcellular location">
    <subcellularLocation>
        <location evidence="1">Nucleus</location>
    </subcellularLocation>
</comment>
<comment type="similarity">
    <text evidence="2">Belongs to the NCBP1 family.</text>
</comment>
<accession>Q754H6</accession>